<gene>
    <name evidence="1" type="primary">argS</name>
    <name type="ordered locus">Mpal_0288</name>
</gene>
<accession>B8GJL7</accession>
<dbReference type="EC" id="6.1.1.19" evidence="1"/>
<dbReference type="EMBL" id="CP001338">
    <property type="protein sequence ID" value="ACL15671.1"/>
    <property type="molecule type" value="Genomic_DNA"/>
</dbReference>
<dbReference type="RefSeq" id="WP_012616990.1">
    <property type="nucleotide sequence ID" value="NC_011832.1"/>
</dbReference>
<dbReference type="SMR" id="B8GJL7"/>
<dbReference type="STRING" id="521011.Mpal_0288"/>
<dbReference type="GeneID" id="7272588"/>
<dbReference type="KEGG" id="mpl:Mpal_0288"/>
<dbReference type="eggNOG" id="arCOG00487">
    <property type="taxonomic scope" value="Archaea"/>
</dbReference>
<dbReference type="HOGENOM" id="CLU_006406_6_1_2"/>
<dbReference type="OrthoDB" id="372102at2157"/>
<dbReference type="Proteomes" id="UP000002457">
    <property type="component" value="Chromosome"/>
</dbReference>
<dbReference type="GO" id="GO:0005737">
    <property type="term" value="C:cytoplasm"/>
    <property type="evidence" value="ECO:0007669"/>
    <property type="project" value="UniProtKB-SubCell"/>
</dbReference>
<dbReference type="GO" id="GO:0004814">
    <property type="term" value="F:arginine-tRNA ligase activity"/>
    <property type="evidence" value="ECO:0007669"/>
    <property type="project" value="UniProtKB-UniRule"/>
</dbReference>
<dbReference type="GO" id="GO:0005524">
    <property type="term" value="F:ATP binding"/>
    <property type="evidence" value="ECO:0007669"/>
    <property type="project" value="UniProtKB-UniRule"/>
</dbReference>
<dbReference type="GO" id="GO:0006420">
    <property type="term" value="P:arginyl-tRNA aminoacylation"/>
    <property type="evidence" value="ECO:0007669"/>
    <property type="project" value="UniProtKB-UniRule"/>
</dbReference>
<dbReference type="CDD" id="cd00671">
    <property type="entry name" value="ArgRS_core"/>
    <property type="match status" value="1"/>
</dbReference>
<dbReference type="Gene3D" id="3.30.1360.70">
    <property type="entry name" value="Arginyl tRNA synthetase N-terminal domain"/>
    <property type="match status" value="1"/>
</dbReference>
<dbReference type="Gene3D" id="3.40.50.620">
    <property type="entry name" value="HUPs"/>
    <property type="match status" value="1"/>
</dbReference>
<dbReference type="Gene3D" id="1.10.730.10">
    <property type="entry name" value="Isoleucyl-tRNA Synthetase, Domain 1"/>
    <property type="match status" value="1"/>
</dbReference>
<dbReference type="HAMAP" id="MF_00123">
    <property type="entry name" value="Arg_tRNA_synth"/>
    <property type="match status" value="1"/>
</dbReference>
<dbReference type="InterPro" id="IPR001412">
    <property type="entry name" value="aa-tRNA-synth_I_CS"/>
</dbReference>
<dbReference type="InterPro" id="IPR001278">
    <property type="entry name" value="Arg-tRNA-ligase"/>
</dbReference>
<dbReference type="InterPro" id="IPR005148">
    <property type="entry name" value="Arg-tRNA-synth_N"/>
</dbReference>
<dbReference type="InterPro" id="IPR036695">
    <property type="entry name" value="Arg-tRNA-synth_N_sf"/>
</dbReference>
<dbReference type="InterPro" id="IPR035684">
    <property type="entry name" value="ArgRS_core"/>
</dbReference>
<dbReference type="InterPro" id="IPR008909">
    <property type="entry name" value="DALR_anticod-bd"/>
</dbReference>
<dbReference type="InterPro" id="IPR014729">
    <property type="entry name" value="Rossmann-like_a/b/a_fold"/>
</dbReference>
<dbReference type="InterPro" id="IPR009080">
    <property type="entry name" value="tRNAsynth_Ia_anticodon-bd"/>
</dbReference>
<dbReference type="NCBIfam" id="TIGR00456">
    <property type="entry name" value="argS"/>
    <property type="match status" value="1"/>
</dbReference>
<dbReference type="PANTHER" id="PTHR11956:SF5">
    <property type="entry name" value="ARGININE--TRNA LIGASE, CYTOPLASMIC"/>
    <property type="match status" value="1"/>
</dbReference>
<dbReference type="PANTHER" id="PTHR11956">
    <property type="entry name" value="ARGINYL-TRNA SYNTHETASE"/>
    <property type="match status" value="1"/>
</dbReference>
<dbReference type="Pfam" id="PF03485">
    <property type="entry name" value="Arg_tRNA_synt_N"/>
    <property type="match status" value="1"/>
</dbReference>
<dbReference type="Pfam" id="PF05746">
    <property type="entry name" value="DALR_1"/>
    <property type="match status" value="1"/>
</dbReference>
<dbReference type="Pfam" id="PF00750">
    <property type="entry name" value="tRNA-synt_1d"/>
    <property type="match status" value="1"/>
</dbReference>
<dbReference type="PRINTS" id="PR01038">
    <property type="entry name" value="TRNASYNTHARG"/>
</dbReference>
<dbReference type="SMART" id="SM01016">
    <property type="entry name" value="Arg_tRNA_synt_N"/>
    <property type="match status" value="1"/>
</dbReference>
<dbReference type="SMART" id="SM00836">
    <property type="entry name" value="DALR_1"/>
    <property type="match status" value="1"/>
</dbReference>
<dbReference type="SUPFAM" id="SSF47323">
    <property type="entry name" value="Anticodon-binding domain of a subclass of class I aminoacyl-tRNA synthetases"/>
    <property type="match status" value="1"/>
</dbReference>
<dbReference type="SUPFAM" id="SSF55190">
    <property type="entry name" value="Arginyl-tRNA synthetase (ArgRS), N-terminal 'additional' domain"/>
    <property type="match status" value="1"/>
</dbReference>
<dbReference type="SUPFAM" id="SSF52374">
    <property type="entry name" value="Nucleotidylyl transferase"/>
    <property type="match status" value="1"/>
</dbReference>
<dbReference type="PROSITE" id="PS00178">
    <property type="entry name" value="AA_TRNA_LIGASE_I"/>
    <property type="match status" value="1"/>
</dbReference>
<sequence length="559" mass="62498">MFTETYTLIERVLKACTDETEIALTDGGEHADLASTVAFALAKKRHQAPKVIAEELAVTLAANPELAGIRVEALGPYLNFSFGPKYLEETLKAAVQDNFGTAPTKPVRIVLEHTSANPNGPLHVGHIRNSILGDTLARAFRKAGYRVEVQYYVNDMGRQIAIVAYGFDHLDTGAKPGEKADHHIARVYVAANRDLEANPDKGAEIDERMQLIEKRDPATATQFRELVSRCLDGFKVTMQGLNVKHDRFIWESDFVKIGDMEKVLGRLAKIPQAVPPTEEDGTFSLDLSSCGYKKSYVLRRSDGTSVYAARDLAYHIWKGRNFDRVIDVLGADHKLITGQLVCTLRLIAEKPPEVVHFEFVSLPEGSMSTRAGTFVSADELIEEMQKRAIEEVQVRRPEIPVEERDAIAASVARAAIRYDIIKVSPEKSTVFDWKEALDFDRQSGPYVQYAHARACSILDRAGPFQERYDLLESPYEIALVKHIAKFPSIIESVVRDLRPHMLATYARDLADLFNTFYHYDPVLKGEGPVRESRLTLVLAAEKTLKEVLETLGIDALRSM</sequence>
<feature type="chain" id="PRO_1000198943" description="Arginine--tRNA ligase">
    <location>
        <begin position="1"/>
        <end position="559"/>
    </location>
</feature>
<feature type="short sequence motif" description="'HIGH' region">
    <location>
        <begin position="116"/>
        <end position="126"/>
    </location>
</feature>
<protein>
    <recommendedName>
        <fullName evidence="1">Arginine--tRNA ligase</fullName>
        <ecNumber evidence="1">6.1.1.19</ecNumber>
    </recommendedName>
    <alternativeName>
        <fullName evidence="1">Arginyl-tRNA synthetase</fullName>
        <shortName evidence="1">ArgRS</shortName>
    </alternativeName>
</protein>
<organism>
    <name type="scientific">Methanosphaerula palustris (strain ATCC BAA-1556 / DSM 19958 / E1-9c)</name>
    <dbReference type="NCBI Taxonomy" id="521011"/>
    <lineage>
        <taxon>Archaea</taxon>
        <taxon>Methanobacteriati</taxon>
        <taxon>Methanobacteriota</taxon>
        <taxon>Stenosarchaea group</taxon>
        <taxon>Methanomicrobia</taxon>
        <taxon>Methanomicrobiales</taxon>
        <taxon>Methanoregulaceae</taxon>
        <taxon>Methanosphaerula</taxon>
    </lineage>
</organism>
<proteinExistence type="inferred from homology"/>
<evidence type="ECO:0000255" key="1">
    <source>
        <dbReference type="HAMAP-Rule" id="MF_00123"/>
    </source>
</evidence>
<name>SYR_METPE</name>
<reference key="1">
    <citation type="journal article" date="2015" name="Genome Announc.">
        <title>Complete Genome Sequence of Methanosphaerula palustris E1-9CT, a Hydrogenotrophic Methanogen Isolated from a Minerotrophic Fen Peatland.</title>
        <authorList>
            <person name="Cadillo-Quiroz H."/>
            <person name="Browne P."/>
            <person name="Kyrpides N."/>
            <person name="Woyke T."/>
            <person name="Goodwin L."/>
            <person name="Detter C."/>
            <person name="Yavitt J.B."/>
            <person name="Zinder S.H."/>
        </authorList>
    </citation>
    <scope>NUCLEOTIDE SEQUENCE [LARGE SCALE GENOMIC DNA]</scope>
    <source>
        <strain>ATCC BAA-1556 / DSM 19958 / E1-9c</strain>
    </source>
</reference>
<keyword id="KW-0030">Aminoacyl-tRNA synthetase</keyword>
<keyword id="KW-0067">ATP-binding</keyword>
<keyword id="KW-0963">Cytoplasm</keyword>
<keyword id="KW-0436">Ligase</keyword>
<keyword id="KW-0547">Nucleotide-binding</keyword>
<keyword id="KW-0648">Protein biosynthesis</keyword>
<keyword id="KW-1185">Reference proteome</keyword>
<comment type="catalytic activity">
    <reaction evidence="1">
        <text>tRNA(Arg) + L-arginine + ATP = L-arginyl-tRNA(Arg) + AMP + diphosphate</text>
        <dbReference type="Rhea" id="RHEA:20301"/>
        <dbReference type="Rhea" id="RHEA-COMP:9658"/>
        <dbReference type="Rhea" id="RHEA-COMP:9673"/>
        <dbReference type="ChEBI" id="CHEBI:30616"/>
        <dbReference type="ChEBI" id="CHEBI:32682"/>
        <dbReference type="ChEBI" id="CHEBI:33019"/>
        <dbReference type="ChEBI" id="CHEBI:78442"/>
        <dbReference type="ChEBI" id="CHEBI:78513"/>
        <dbReference type="ChEBI" id="CHEBI:456215"/>
        <dbReference type="EC" id="6.1.1.19"/>
    </reaction>
</comment>
<comment type="subcellular location">
    <subcellularLocation>
        <location evidence="1">Cytoplasm</location>
    </subcellularLocation>
</comment>
<comment type="similarity">
    <text evidence="1">Belongs to the class-I aminoacyl-tRNA synthetase family.</text>
</comment>